<dbReference type="EC" id="4.1.3.1" evidence="1"/>
<dbReference type="EC" id="4.1.3.30" evidence="1"/>
<dbReference type="EMBL" id="X98860">
    <property type="protein sequence ID" value="CAA67367.1"/>
    <property type="molecule type" value="Genomic_DNA"/>
</dbReference>
<dbReference type="PIR" id="JC6182">
    <property type="entry name" value="JC6182"/>
</dbReference>
<dbReference type="SMR" id="O13439"/>
<dbReference type="VEuPathDB" id="FungiDB:CC1G_07122"/>
<dbReference type="VEuPathDB" id="FungiDB:CC2G_012762"/>
<dbReference type="UniPathway" id="UPA00703">
    <property type="reaction ID" value="UER00719"/>
</dbReference>
<dbReference type="GO" id="GO:0009514">
    <property type="term" value="C:glyoxysome"/>
    <property type="evidence" value="ECO:0007669"/>
    <property type="project" value="UniProtKB-SubCell"/>
</dbReference>
<dbReference type="GO" id="GO:0004451">
    <property type="term" value="F:isocitrate lyase activity"/>
    <property type="evidence" value="ECO:0007669"/>
    <property type="project" value="UniProtKB-EC"/>
</dbReference>
<dbReference type="GO" id="GO:0046872">
    <property type="term" value="F:metal ion binding"/>
    <property type="evidence" value="ECO:0007669"/>
    <property type="project" value="UniProtKB-KW"/>
</dbReference>
<dbReference type="GO" id="GO:0046421">
    <property type="term" value="F:methylisocitrate lyase activity"/>
    <property type="evidence" value="ECO:0007669"/>
    <property type="project" value="UniProtKB-EC"/>
</dbReference>
<dbReference type="GO" id="GO:0006097">
    <property type="term" value="P:glyoxylate cycle"/>
    <property type="evidence" value="ECO:0007669"/>
    <property type="project" value="UniProtKB-UniPathway"/>
</dbReference>
<dbReference type="GO" id="GO:0006099">
    <property type="term" value="P:tricarboxylic acid cycle"/>
    <property type="evidence" value="ECO:0007669"/>
    <property type="project" value="UniProtKB-KW"/>
</dbReference>
<dbReference type="CDD" id="cd00377">
    <property type="entry name" value="ICL_PEPM"/>
    <property type="match status" value="1"/>
</dbReference>
<dbReference type="FunFam" id="1.10.10.850:FF:000001">
    <property type="entry name" value="Isocitrate lyase"/>
    <property type="match status" value="1"/>
</dbReference>
<dbReference type="Gene3D" id="1.10.10.850">
    <property type="match status" value="1"/>
</dbReference>
<dbReference type="Gene3D" id="3.20.20.60">
    <property type="entry name" value="Phosphoenolpyruvate-binding domains"/>
    <property type="match status" value="1"/>
</dbReference>
<dbReference type="InterPro" id="IPR039556">
    <property type="entry name" value="ICL/PEPM"/>
</dbReference>
<dbReference type="InterPro" id="IPR006254">
    <property type="entry name" value="Isocitrate_lyase"/>
</dbReference>
<dbReference type="InterPro" id="IPR018523">
    <property type="entry name" value="Isocitrate_lyase_ph_CS"/>
</dbReference>
<dbReference type="InterPro" id="IPR015813">
    <property type="entry name" value="Pyrv/PenolPyrv_kinase-like_dom"/>
</dbReference>
<dbReference type="InterPro" id="IPR040442">
    <property type="entry name" value="Pyrv_kinase-like_dom_sf"/>
</dbReference>
<dbReference type="NCBIfam" id="TIGR01346">
    <property type="entry name" value="isocit_lyase"/>
    <property type="match status" value="1"/>
</dbReference>
<dbReference type="PANTHER" id="PTHR21631:SF3">
    <property type="entry name" value="BIFUNCTIONAL GLYOXYLATE CYCLE PROTEIN"/>
    <property type="match status" value="1"/>
</dbReference>
<dbReference type="PANTHER" id="PTHR21631">
    <property type="entry name" value="ISOCITRATE LYASE/MALATE SYNTHASE"/>
    <property type="match status" value="1"/>
</dbReference>
<dbReference type="Pfam" id="PF00463">
    <property type="entry name" value="ICL"/>
    <property type="match status" value="1"/>
</dbReference>
<dbReference type="PIRSF" id="PIRSF001362">
    <property type="entry name" value="Isocit_lyase"/>
    <property type="match status" value="1"/>
</dbReference>
<dbReference type="SUPFAM" id="SSF51621">
    <property type="entry name" value="Phosphoenolpyruvate/pyruvate domain"/>
    <property type="match status" value="1"/>
</dbReference>
<dbReference type="PROSITE" id="PS00161">
    <property type="entry name" value="ISOCITRATE_LYASE"/>
    <property type="match status" value="1"/>
</dbReference>
<gene>
    <name evidence="5" type="primary">ACU-7</name>
</gene>
<proteinExistence type="inferred from homology"/>
<sequence>MSSERAQFASEVAEVERWWKSPRFARVNRPYTAADVVSKRGTIKINYPSDVQGKKLWKLLSEHAKNGTPSHTYGALDPVQVTKMAKYLETVYVSGWQSSSTASSSNEPGPDLADYPSNTVPNKVEHLFMAQLFHDRKQREARSRMSDAELANTPVIDYLRPIVADADTGHGGLTAVMKLTKMFVEKGAAGIHIEDQAPGTKKCGHMAGKVLVPIQEHINRLVAIRLQYDIMGVENLVVARTDSEAATLITSNIDDRDHPFIQGSTNPSLPPLNNVMVEAEAQGKTGDQLQAIEDGWIKAANLQLFPQALAQALANEGASRSTVEKLVARVSRLSWSQAVAVAQKEFGLKQVPYWNWDAPRTREGYYRYQGGTECAIHRANAFAPYADLLWMETKKPILAQAKEFAAGVHAVHPGQWLAYNLSPSFNWKLLPQRQDMQAYVWELGKLGFVWQFITLAGLHSNAYISDLFAQNFAKTGMKAYVELVQSREREIGCDVLTHQKWSGADYADSLIKTVTGGVSSTAAMGAGVTESQFTSKL</sequence>
<accession>O13439</accession>
<feature type="chain" id="PRO_0000068787" description="Isocitrate lyase">
    <location>
        <begin position="1"/>
        <end position="537"/>
    </location>
</feature>
<feature type="short sequence motif" description="Microbody targeting signal" evidence="4">
    <location>
        <begin position="535"/>
        <end position="537"/>
    </location>
</feature>
<feature type="active site" description="Proton acceptor" evidence="3">
    <location>
        <position position="203"/>
    </location>
</feature>
<feature type="binding site" evidence="3">
    <location>
        <begin position="94"/>
        <end position="96"/>
    </location>
    <ligand>
        <name>substrate</name>
    </ligand>
</feature>
<feature type="binding site" evidence="3">
    <location>
        <position position="165"/>
    </location>
    <ligand>
        <name>Mg(2+)</name>
        <dbReference type="ChEBI" id="CHEBI:18420"/>
    </ligand>
</feature>
<feature type="binding site" evidence="3">
    <location>
        <begin position="204"/>
        <end position="205"/>
    </location>
    <ligand>
        <name>substrate</name>
    </ligand>
</feature>
<feature type="binding site" evidence="3">
    <location>
        <position position="240"/>
    </location>
    <ligand>
        <name>substrate</name>
    </ligand>
</feature>
<feature type="binding site" evidence="3">
    <location>
        <begin position="420"/>
        <end position="424"/>
    </location>
    <ligand>
        <name>substrate</name>
    </ligand>
</feature>
<feature type="binding site" evidence="3">
    <location>
        <position position="454"/>
    </location>
    <ligand>
        <name>substrate</name>
    </ligand>
</feature>
<keyword id="KW-0329">Glyoxylate bypass</keyword>
<keyword id="KW-0330">Glyoxysome</keyword>
<keyword id="KW-0456">Lyase</keyword>
<keyword id="KW-0460">Magnesium</keyword>
<keyword id="KW-0479">Metal-binding</keyword>
<keyword id="KW-0576">Peroxisome</keyword>
<keyword id="KW-0816">Tricarboxylic acid cycle</keyword>
<organism>
    <name type="scientific">Coprinopsis cinerea</name>
    <name type="common">Inky cap fungus</name>
    <name type="synonym">Hormographiella aspergillata</name>
    <dbReference type="NCBI Taxonomy" id="5346"/>
    <lineage>
        <taxon>Eukaryota</taxon>
        <taxon>Fungi</taxon>
        <taxon>Dikarya</taxon>
        <taxon>Basidiomycota</taxon>
        <taxon>Agaricomycotina</taxon>
        <taxon>Agaricomycetes</taxon>
        <taxon>Agaricomycetidae</taxon>
        <taxon>Agaricales</taxon>
        <taxon>Agaricineae</taxon>
        <taxon>Psathyrellaceae</taxon>
        <taxon>Coprinopsis</taxon>
    </lineage>
</organism>
<comment type="function">
    <text evidence="1">Catalyzes the formation of succinate and glyoxylate from isocitrate, a key step of the glyoxylate cycle, which operates as an anaplerotic route for replenishing the tricarboxylic acid cycle. Required for growth on ethanol or acetate, but dispensable when fermentable carbon sources are available. Also acts on 2-methylisocitrate.</text>
</comment>
<comment type="catalytic activity">
    <reaction evidence="1">
        <text>D-threo-isocitrate = glyoxylate + succinate</text>
        <dbReference type="Rhea" id="RHEA:13245"/>
        <dbReference type="ChEBI" id="CHEBI:15562"/>
        <dbReference type="ChEBI" id="CHEBI:30031"/>
        <dbReference type="ChEBI" id="CHEBI:36655"/>
        <dbReference type="EC" id="4.1.3.1"/>
    </reaction>
</comment>
<comment type="catalytic activity">
    <reaction evidence="1">
        <text>(2S,3R)-3-hydroxybutane-1,2,3-tricarboxylate = pyruvate + succinate</text>
        <dbReference type="Rhea" id="RHEA:16809"/>
        <dbReference type="ChEBI" id="CHEBI:15361"/>
        <dbReference type="ChEBI" id="CHEBI:30031"/>
        <dbReference type="ChEBI" id="CHEBI:57429"/>
        <dbReference type="EC" id="4.1.3.30"/>
    </reaction>
</comment>
<comment type="cofactor">
    <cofactor evidence="3">
        <name>Mg(2+)</name>
        <dbReference type="ChEBI" id="CHEBI:18420"/>
    </cofactor>
</comment>
<comment type="pathway">
    <text>Carbohydrate metabolism; glyoxylate cycle; (S)-malate from isocitrate: step 1/2.</text>
</comment>
<comment type="subunit">
    <text evidence="1">Homotetramer.</text>
</comment>
<comment type="subcellular location">
    <subcellularLocation>
        <location evidence="2">Glyoxysome</location>
    </subcellularLocation>
</comment>
<comment type="similarity">
    <text evidence="6">Belongs to the isocitrate lyase/PEP mutase superfamily. Isocitrate lyase family.</text>
</comment>
<evidence type="ECO:0000250" key="1">
    <source>
        <dbReference type="UniProtKB" id="P28240"/>
    </source>
</evidence>
<evidence type="ECO:0000250" key="2">
    <source>
        <dbReference type="UniProtKB" id="P28299"/>
    </source>
</evidence>
<evidence type="ECO:0000250" key="3">
    <source>
        <dbReference type="UniProtKB" id="P9WKK7"/>
    </source>
</evidence>
<evidence type="ECO:0000255" key="4"/>
<evidence type="ECO:0000303" key="5">
    <source>
    </source>
</evidence>
<evidence type="ECO:0000305" key="6"/>
<protein>
    <recommendedName>
        <fullName evidence="5">Isocitrate lyase</fullName>
        <shortName evidence="6">ICL</shortName>
        <shortName evidence="6">Isocitrase</shortName>
        <shortName evidence="6">Isocitratase</shortName>
        <ecNumber evidence="1">4.1.3.1</ecNumber>
    </recommendedName>
    <alternativeName>
        <fullName evidence="1">Methylisocitrate lyase</fullName>
        <shortName evidence="6">MICA</shortName>
        <ecNumber evidence="1">4.1.3.30</ecNumber>
    </alternativeName>
    <alternativeName>
        <fullName evidence="6">Threo-D(S)-isocitrate glyoxylate-lyase</fullName>
    </alternativeName>
</protein>
<name>ACEA_COPCI</name>
<reference key="1">
    <citation type="journal article" date="1997" name="Gene">
        <title>Molecular analysis of the isocitrate lyase gene (acu-7) of the mushroom Coprinus cinereus.</title>
        <authorList>
            <person name="Chaure P.T."/>
            <person name="Casselton L.A."/>
            <person name="Connerton I.F."/>
        </authorList>
    </citation>
    <scope>NUCLEOTIDE SEQUENCE [GENOMIC DNA]</scope>
    <source>
        <strain>JV6</strain>
    </source>
</reference>